<proteinExistence type="inferred from homology"/>
<protein>
    <recommendedName>
        <fullName evidence="1">Phosphoenolpyruvate carboxykinase [GTP]</fullName>
        <shortName evidence="1">PEP carboxykinase</shortName>
        <shortName evidence="1">PEPCK</shortName>
        <ecNumber evidence="1">4.1.1.32</ecNumber>
    </recommendedName>
</protein>
<accession>Q8KAD1</accession>
<feature type="chain" id="PRO_0000103599" description="Phosphoenolpyruvate carboxykinase [GTP]">
    <location>
        <begin position="1"/>
        <end position="621"/>
    </location>
</feature>
<feature type="active site" evidence="1">
    <location>
        <position position="271"/>
    </location>
</feature>
<feature type="binding site" evidence="1">
    <location>
        <position position="79"/>
    </location>
    <ligand>
        <name>substrate</name>
    </ligand>
</feature>
<feature type="binding site" evidence="1">
    <location>
        <begin position="218"/>
        <end position="220"/>
    </location>
    <ligand>
        <name>substrate</name>
    </ligand>
</feature>
<feature type="binding site" evidence="1">
    <location>
        <position position="227"/>
    </location>
    <ligand>
        <name>Mn(2+)</name>
        <dbReference type="ChEBI" id="CHEBI:29035"/>
    </ligand>
</feature>
<feature type="binding site" evidence="1">
    <location>
        <position position="247"/>
    </location>
    <ligand>
        <name>Mn(2+)</name>
        <dbReference type="ChEBI" id="CHEBI:29035"/>
    </ligand>
</feature>
<feature type="binding site" evidence="1">
    <location>
        <position position="269"/>
    </location>
    <ligand>
        <name>substrate</name>
    </ligand>
</feature>
<feature type="binding site" evidence="1">
    <location>
        <begin position="270"/>
        <end position="275"/>
    </location>
    <ligand>
        <name>GTP</name>
        <dbReference type="ChEBI" id="CHEBI:37565"/>
    </ligand>
</feature>
<feature type="binding site" evidence="1">
    <location>
        <position position="296"/>
    </location>
    <ligand>
        <name>Mn(2+)</name>
        <dbReference type="ChEBI" id="CHEBI:29035"/>
    </ligand>
</feature>
<feature type="binding site" evidence="1">
    <location>
        <begin position="386"/>
        <end position="388"/>
    </location>
    <ligand>
        <name>substrate</name>
    </ligand>
</feature>
<feature type="binding site" evidence="1">
    <location>
        <position position="388"/>
    </location>
    <ligand>
        <name>GTP</name>
        <dbReference type="ChEBI" id="CHEBI:37565"/>
    </ligand>
</feature>
<feature type="binding site" evidence="1">
    <location>
        <position position="419"/>
    </location>
    <ligand>
        <name>GTP</name>
        <dbReference type="ChEBI" id="CHEBI:37565"/>
    </ligand>
</feature>
<feature type="binding site" evidence="1">
    <location>
        <begin position="512"/>
        <end position="515"/>
    </location>
    <ligand>
        <name>GTP</name>
        <dbReference type="ChEBI" id="CHEBI:37565"/>
    </ligand>
</feature>
<name>PCKG_CHLTE</name>
<keyword id="KW-0963">Cytoplasm</keyword>
<keyword id="KW-0210">Decarboxylase</keyword>
<keyword id="KW-0312">Gluconeogenesis</keyword>
<keyword id="KW-0342">GTP-binding</keyword>
<keyword id="KW-0456">Lyase</keyword>
<keyword id="KW-0464">Manganese</keyword>
<keyword id="KW-0479">Metal-binding</keyword>
<keyword id="KW-0547">Nucleotide-binding</keyword>
<keyword id="KW-1185">Reference proteome</keyword>
<dbReference type="EC" id="4.1.1.32" evidence="1"/>
<dbReference type="EMBL" id="AE006470">
    <property type="protein sequence ID" value="AAM73448.1"/>
    <property type="molecule type" value="Genomic_DNA"/>
</dbReference>
<dbReference type="RefSeq" id="NP_663106.1">
    <property type="nucleotide sequence ID" value="NC_002932.3"/>
</dbReference>
<dbReference type="RefSeq" id="WP_010933885.1">
    <property type="nucleotide sequence ID" value="NC_002932.3"/>
</dbReference>
<dbReference type="SMR" id="Q8KAD1"/>
<dbReference type="STRING" id="194439.CT2232"/>
<dbReference type="EnsemblBacteria" id="AAM73448">
    <property type="protein sequence ID" value="AAM73448"/>
    <property type="gene ID" value="CT2232"/>
</dbReference>
<dbReference type="KEGG" id="cte:CT2232"/>
<dbReference type="PATRIC" id="fig|194439.7.peg.2025"/>
<dbReference type="eggNOG" id="COG1274">
    <property type="taxonomic scope" value="Bacteria"/>
</dbReference>
<dbReference type="HOGENOM" id="CLU_028872_1_1_10"/>
<dbReference type="OrthoDB" id="9758871at2"/>
<dbReference type="UniPathway" id="UPA00138"/>
<dbReference type="Proteomes" id="UP000001007">
    <property type="component" value="Chromosome"/>
</dbReference>
<dbReference type="GO" id="GO:0005829">
    <property type="term" value="C:cytosol"/>
    <property type="evidence" value="ECO:0007669"/>
    <property type="project" value="TreeGrafter"/>
</dbReference>
<dbReference type="GO" id="GO:0005525">
    <property type="term" value="F:GTP binding"/>
    <property type="evidence" value="ECO:0007669"/>
    <property type="project" value="UniProtKB-UniRule"/>
</dbReference>
<dbReference type="GO" id="GO:0030145">
    <property type="term" value="F:manganese ion binding"/>
    <property type="evidence" value="ECO:0007669"/>
    <property type="project" value="UniProtKB-UniRule"/>
</dbReference>
<dbReference type="GO" id="GO:0004613">
    <property type="term" value="F:phosphoenolpyruvate carboxykinase (GTP) activity"/>
    <property type="evidence" value="ECO:0007669"/>
    <property type="project" value="UniProtKB-UniRule"/>
</dbReference>
<dbReference type="GO" id="GO:0071333">
    <property type="term" value="P:cellular response to glucose stimulus"/>
    <property type="evidence" value="ECO:0007669"/>
    <property type="project" value="TreeGrafter"/>
</dbReference>
<dbReference type="GO" id="GO:0006094">
    <property type="term" value="P:gluconeogenesis"/>
    <property type="evidence" value="ECO:0007669"/>
    <property type="project" value="UniProtKB-UniRule"/>
</dbReference>
<dbReference type="GO" id="GO:0046327">
    <property type="term" value="P:glycerol biosynthetic process from pyruvate"/>
    <property type="evidence" value="ECO:0007669"/>
    <property type="project" value="TreeGrafter"/>
</dbReference>
<dbReference type="GO" id="GO:0006107">
    <property type="term" value="P:oxaloacetate metabolic process"/>
    <property type="evidence" value="ECO:0007669"/>
    <property type="project" value="TreeGrafter"/>
</dbReference>
<dbReference type="GO" id="GO:0019543">
    <property type="term" value="P:propionate catabolic process"/>
    <property type="evidence" value="ECO:0007669"/>
    <property type="project" value="TreeGrafter"/>
</dbReference>
<dbReference type="GO" id="GO:0033993">
    <property type="term" value="P:response to lipid"/>
    <property type="evidence" value="ECO:0007669"/>
    <property type="project" value="TreeGrafter"/>
</dbReference>
<dbReference type="GO" id="GO:0042594">
    <property type="term" value="P:response to starvation"/>
    <property type="evidence" value="ECO:0007669"/>
    <property type="project" value="TreeGrafter"/>
</dbReference>
<dbReference type="CDD" id="cd00819">
    <property type="entry name" value="PEPCK_GTP"/>
    <property type="match status" value="1"/>
</dbReference>
<dbReference type="FunFam" id="3.40.449.10:FF:000005">
    <property type="entry name" value="Phosphoenolpyruvate carboxykinase [GTP]"/>
    <property type="match status" value="1"/>
</dbReference>
<dbReference type="Gene3D" id="3.90.228.20">
    <property type="match status" value="1"/>
</dbReference>
<dbReference type="Gene3D" id="3.40.449.10">
    <property type="entry name" value="Phosphoenolpyruvate Carboxykinase, domain 1"/>
    <property type="match status" value="1"/>
</dbReference>
<dbReference type="Gene3D" id="2.170.8.10">
    <property type="entry name" value="Phosphoenolpyruvate Carboxykinase, domain 2"/>
    <property type="match status" value="1"/>
</dbReference>
<dbReference type="HAMAP" id="MF_00452">
    <property type="entry name" value="PEPCK_GTP"/>
    <property type="match status" value="1"/>
</dbReference>
<dbReference type="InterPro" id="IPR018091">
    <property type="entry name" value="PEP_carboxykin_GTP_CS"/>
</dbReference>
<dbReference type="InterPro" id="IPR013035">
    <property type="entry name" value="PEP_carboxykinase_C"/>
</dbReference>
<dbReference type="InterPro" id="IPR008209">
    <property type="entry name" value="PEP_carboxykinase_GTP"/>
</dbReference>
<dbReference type="InterPro" id="IPR035077">
    <property type="entry name" value="PEP_carboxykinase_GTP_C"/>
</dbReference>
<dbReference type="InterPro" id="IPR035078">
    <property type="entry name" value="PEP_carboxykinase_GTP_N"/>
</dbReference>
<dbReference type="InterPro" id="IPR008210">
    <property type="entry name" value="PEP_carboxykinase_N"/>
</dbReference>
<dbReference type="NCBIfam" id="NF003253">
    <property type="entry name" value="PRK04210.1"/>
    <property type="match status" value="1"/>
</dbReference>
<dbReference type="PANTHER" id="PTHR11561">
    <property type="entry name" value="PHOSPHOENOLPYRUVATE CARBOXYKINASE"/>
    <property type="match status" value="1"/>
</dbReference>
<dbReference type="PANTHER" id="PTHR11561:SF0">
    <property type="entry name" value="PHOSPHOENOLPYRUVATE CARBOXYKINASE [GTP]-RELATED"/>
    <property type="match status" value="1"/>
</dbReference>
<dbReference type="Pfam" id="PF00821">
    <property type="entry name" value="PEPCK_GTP"/>
    <property type="match status" value="1"/>
</dbReference>
<dbReference type="Pfam" id="PF17297">
    <property type="entry name" value="PEPCK_N"/>
    <property type="match status" value="1"/>
</dbReference>
<dbReference type="PIRSF" id="PIRSF001348">
    <property type="entry name" value="PEP_carboxykinase_GTP"/>
    <property type="match status" value="1"/>
</dbReference>
<dbReference type="SUPFAM" id="SSF68923">
    <property type="entry name" value="PEP carboxykinase N-terminal domain"/>
    <property type="match status" value="1"/>
</dbReference>
<dbReference type="SUPFAM" id="SSF53795">
    <property type="entry name" value="PEP carboxykinase-like"/>
    <property type="match status" value="1"/>
</dbReference>
<dbReference type="PROSITE" id="PS00505">
    <property type="entry name" value="PEPCK_GTP"/>
    <property type="match status" value="1"/>
</dbReference>
<reference key="1">
    <citation type="journal article" date="2002" name="Proc. Natl. Acad. Sci. U.S.A.">
        <title>The complete genome sequence of Chlorobium tepidum TLS, a photosynthetic, anaerobic, green-sulfur bacterium.</title>
        <authorList>
            <person name="Eisen J.A."/>
            <person name="Nelson K.E."/>
            <person name="Paulsen I.T."/>
            <person name="Heidelberg J.F."/>
            <person name="Wu M."/>
            <person name="Dodson R.J."/>
            <person name="DeBoy R.T."/>
            <person name="Gwinn M.L."/>
            <person name="Nelson W.C."/>
            <person name="Haft D.H."/>
            <person name="Hickey E.K."/>
            <person name="Peterson J.D."/>
            <person name="Durkin A.S."/>
            <person name="Kolonay J.F."/>
            <person name="Yang F."/>
            <person name="Holt I.E."/>
            <person name="Umayam L.A."/>
            <person name="Mason T.M."/>
            <person name="Brenner M."/>
            <person name="Shea T.P."/>
            <person name="Parksey D.S."/>
            <person name="Nierman W.C."/>
            <person name="Feldblyum T.V."/>
            <person name="Hansen C.L."/>
            <person name="Craven M.B."/>
            <person name="Radune D."/>
            <person name="Vamathevan J.J."/>
            <person name="Khouri H.M."/>
            <person name="White O."/>
            <person name="Gruber T.M."/>
            <person name="Ketchum K.A."/>
            <person name="Venter J.C."/>
            <person name="Tettelin H."/>
            <person name="Bryant D.A."/>
            <person name="Fraser C.M."/>
        </authorList>
    </citation>
    <scope>NUCLEOTIDE SEQUENCE [LARGE SCALE GENOMIC DNA]</scope>
    <source>
        <strain>ATCC 49652 / DSM 12025 / NBRC 103806 / TLS</strain>
    </source>
</reference>
<organism>
    <name type="scientific">Chlorobaculum tepidum (strain ATCC 49652 / DSM 12025 / NBRC 103806 / TLS)</name>
    <name type="common">Chlorobium tepidum</name>
    <dbReference type="NCBI Taxonomy" id="194439"/>
    <lineage>
        <taxon>Bacteria</taxon>
        <taxon>Pseudomonadati</taxon>
        <taxon>Chlorobiota</taxon>
        <taxon>Chlorobiia</taxon>
        <taxon>Chlorobiales</taxon>
        <taxon>Chlorobiaceae</taxon>
        <taxon>Chlorobaculum</taxon>
    </lineage>
</organism>
<comment type="function">
    <text evidence="1">Catalyzes the conversion of oxaloacetate (OAA) to phosphoenolpyruvate (PEP), the rate-limiting step in the metabolic pathway that produces glucose from lactate and other precursors derived from the citric acid cycle.</text>
</comment>
<comment type="catalytic activity">
    <reaction evidence="1">
        <text>oxaloacetate + GTP = phosphoenolpyruvate + GDP + CO2</text>
        <dbReference type="Rhea" id="RHEA:10388"/>
        <dbReference type="ChEBI" id="CHEBI:16452"/>
        <dbReference type="ChEBI" id="CHEBI:16526"/>
        <dbReference type="ChEBI" id="CHEBI:37565"/>
        <dbReference type="ChEBI" id="CHEBI:58189"/>
        <dbReference type="ChEBI" id="CHEBI:58702"/>
        <dbReference type="EC" id="4.1.1.32"/>
    </reaction>
</comment>
<comment type="cofactor">
    <cofactor evidence="1">
        <name>Mn(2+)</name>
        <dbReference type="ChEBI" id="CHEBI:29035"/>
    </cofactor>
    <text evidence="1">Binds 1 Mn(2+) ion per subunit.</text>
</comment>
<comment type="pathway">
    <text evidence="1">Carbohydrate biosynthesis; gluconeogenesis.</text>
</comment>
<comment type="subunit">
    <text evidence="1">Monomer.</text>
</comment>
<comment type="subcellular location">
    <subcellularLocation>
        <location evidence="1">Cytoplasm</location>
    </subcellularLocation>
</comment>
<comment type="similarity">
    <text evidence="1">Belongs to the phosphoenolpyruvate carboxykinase [GTP] family.</text>
</comment>
<gene>
    <name evidence="1" type="primary">pckG</name>
    <name type="synonym">pckA</name>
    <name type="ordered locus">CT2232</name>
</gene>
<evidence type="ECO:0000255" key="1">
    <source>
        <dbReference type="HAMAP-Rule" id="MF_00452"/>
    </source>
</evidence>
<sequence length="621" mass="69933">MEPIPINAPDSVRNLKLLQWVRETAELCQPDSVCWCDGSVEEYDRLCNEMVASGTFIKLSEQKRPNSYLCRSDPSDVARVEDRTFICSIRRQDAGPTNNWVAPKEMKATLNKLLAGCMKGRTMYIIPFSMGPLGSHIAHIGVEITDSPYVVTNMRIMTRMGRAVLDLLDEEAEFVPCLHSVGAPLEPGQQDVPWPCNDTKYIVHFPEERSIVSYGSGYGGNALLGKKCFALRIASSMARDEGWLAEHMLILGVESPEGEKDYVAAAFPSACGKTNFAMMIPPGEMEGWKITTVGDDIAWIKQGKDGRLYAINPEYGFFGVAPGTSEKSNPNAMATLHANCIFTNVALTPDGDVWWEGMTDTPPDFLIDWQGKPWVPGCERPAAHPNARFTAPAHQCPVIDENWENPDGVPISAFIFGGRRGDTIPLVYQSANWYYGVYLAATMGSEKTAAAAGKIGDVRRDPFAMLPFCGYHMGDYFNHWLHVGRTLTDPPRIFGVNWFRKDENGKFLWPGFGENMRVLKWIIGRVHGRAAAVESPLGWMPRYESLDWRGLDGFTRDKFSTLMSVDREAWKQELFSHEELLEKLYDRLPKEFTHIRELMLSTLWRSPEHWELAPERYTAEH</sequence>